<comment type="function">
    <text evidence="1">Catalyzes the synthesis of Und-PP-GlcNAc-ManNAcA (Lipid II), the second lipid-linked intermediate involved in enterobacterial common antigen (ECA) synthesis.</text>
</comment>
<comment type="catalytic activity">
    <reaction evidence="1">
        <text>UDP-N-acetyl-alpha-D-mannosaminouronate + N-acetyl-alpha-D-glucosaminyl-di-trans,octa-cis-undecaprenyl diphosphate = beta-D-ManNAcA-(1-&gt;4)-alpha-D-GlcNAc-di-trans,octa-cis-undecaprenyl diphosphate + UDP + H(+)</text>
        <dbReference type="Rhea" id="RHEA:28366"/>
        <dbReference type="ChEBI" id="CHEBI:15378"/>
        <dbReference type="ChEBI" id="CHEBI:58223"/>
        <dbReference type="ChEBI" id="CHEBI:61495"/>
        <dbReference type="ChEBI" id="CHEBI:62959"/>
        <dbReference type="ChEBI" id="CHEBI:70731"/>
        <dbReference type="EC" id="2.4.1.180"/>
    </reaction>
</comment>
<comment type="pathway">
    <text evidence="1">Bacterial outer membrane biogenesis; enterobacterial common antigen biosynthesis.</text>
</comment>
<comment type="similarity">
    <text evidence="1">Belongs to the glycosyltransferase 26 family.</text>
</comment>
<keyword id="KW-0328">Glycosyltransferase</keyword>
<keyword id="KW-1185">Reference proteome</keyword>
<keyword id="KW-0808">Transferase</keyword>
<feature type="chain" id="PRO_1000062732" description="UDP-N-acetyl-D-mannosaminuronic acid transferase">
    <location>
        <begin position="1"/>
        <end position="246"/>
    </location>
</feature>
<organism>
    <name type="scientific">Shigella dysenteriae serotype 1 (strain Sd197)</name>
    <dbReference type="NCBI Taxonomy" id="300267"/>
    <lineage>
        <taxon>Bacteria</taxon>
        <taxon>Pseudomonadati</taxon>
        <taxon>Pseudomonadota</taxon>
        <taxon>Gammaproteobacteria</taxon>
        <taxon>Enterobacterales</taxon>
        <taxon>Enterobacteriaceae</taxon>
        <taxon>Shigella</taxon>
    </lineage>
</organism>
<evidence type="ECO:0000255" key="1">
    <source>
        <dbReference type="HAMAP-Rule" id="MF_01001"/>
    </source>
</evidence>
<sequence length="246" mass="27962">MNNNTTAPTYTLRGLQLIGWRDMQHALDYLFADGQLKQGTLVAINAEKMLTIEDNAEVRELINAAEFKYADGISVVRSVRKKYPQAQVSRVAGADLWEELMARAGKEGTPVFLVGGKPEVLAQTEAKLRNQWNVNIVGSQDGYFKPEQRQALFERIHASGAQIVTVAMGSPKQEIFMRDCRLVHPDALYMGVGGTYDVFTGHVKRAPKIWQTLGLEWLYRLLSQPSRIKRQLRLLRYLRWHYTGNL</sequence>
<name>WECG_SHIDS</name>
<dbReference type="EC" id="2.4.1.180" evidence="1"/>
<dbReference type="EMBL" id="CP000034">
    <property type="protein sequence ID" value="ABB63882.1"/>
    <property type="molecule type" value="Genomic_DNA"/>
</dbReference>
<dbReference type="RefSeq" id="WP_001064038.1">
    <property type="nucleotide sequence ID" value="NC_007606.1"/>
</dbReference>
<dbReference type="RefSeq" id="YP_405373.1">
    <property type="nucleotide sequence ID" value="NC_007606.1"/>
</dbReference>
<dbReference type="SMR" id="Q329X3"/>
<dbReference type="STRING" id="300267.SDY_3953"/>
<dbReference type="CAZy" id="GT26">
    <property type="family name" value="Glycosyltransferase Family 26"/>
</dbReference>
<dbReference type="EnsemblBacteria" id="ABB63882">
    <property type="protein sequence ID" value="ABB63882"/>
    <property type="gene ID" value="SDY_3953"/>
</dbReference>
<dbReference type="GeneID" id="93778149"/>
<dbReference type="KEGG" id="sdy:SDY_3953"/>
<dbReference type="PATRIC" id="fig|300267.13.peg.4664"/>
<dbReference type="HOGENOM" id="CLU_063203_3_2_6"/>
<dbReference type="UniPathway" id="UPA00566"/>
<dbReference type="Proteomes" id="UP000002716">
    <property type="component" value="Chromosome"/>
</dbReference>
<dbReference type="GO" id="GO:0047241">
    <property type="term" value="F:lipopolysaccharide N-acetylmannosaminouronosyltransferase activity"/>
    <property type="evidence" value="ECO:0007669"/>
    <property type="project" value="UniProtKB-UniRule"/>
</dbReference>
<dbReference type="GO" id="GO:0009246">
    <property type="term" value="P:enterobacterial common antigen biosynthetic process"/>
    <property type="evidence" value="ECO:0007669"/>
    <property type="project" value="UniProtKB-UniRule"/>
</dbReference>
<dbReference type="CDD" id="cd06533">
    <property type="entry name" value="Glyco_transf_WecG_TagA"/>
    <property type="match status" value="1"/>
</dbReference>
<dbReference type="HAMAP" id="MF_01001">
    <property type="entry name" value="WecG_RffM"/>
    <property type="match status" value="1"/>
</dbReference>
<dbReference type="InterPro" id="IPR023085">
    <property type="entry name" value="UDP-ManNAcA_Trfase_WecG"/>
</dbReference>
<dbReference type="InterPro" id="IPR004629">
    <property type="entry name" value="WecG_TagA_CpsF"/>
</dbReference>
<dbReference type="NCBIfam" id="NF002980">
    <property type="entry name" value="PRK03692.1"/>
    <property type="match status" value="1"/>
</dbReference>
<dbReference type="NCBIfam" id="TIGR00696">
    <property type="entry name" value="wecG_tagA_cpsF"/>
    <property type="match status" value="1"/>
</dbReference>
<dbReference type="PANTHER" id="PTHR34136">
    <property type="match status" value="1"/>
</dbReference>
<dbReference type="PANTHER" id="PTHR34136:SF1">
    <property type="entry name" value="UDP-N-ACETYL-D-MANNOSAMINURONIC ACID TRANSFERASE"/>
    <property type="match status" value="1"/>
</dbReference>
<dbReference type="Pfam" id="PF03808">
    <property type="entry name" value="Glyco_tran_WecG"/>
    <property type="match status" value="1"/>
</dbReference>
<accession>Q329X3</accession>
<gene>
    <name evidence="1" type="primary">wecG</name>
    <name evidence="1" type="synonym">rffM</name>
    <name type="ordered locus">SDY_3953</name>
</gene>
<reference key="1">
    <citation type="journal article" date="2005" name="Nucleic Acids Res.">
        <title>Genome dynamics and diversity of Shigella species, the etiologic agents of bacillary dysentery.</title>
        <authorList>
            <person name="Yang F."/>
            <person name="Yang J."/>
            <person name="Zhang X."/>
            <person name="Chen L."/>
            <person name="Jiang Y."/>
            <person name="Yan Y."/>
            <person name="Tang X."/>
            <person name="Wang J."/>
            <person name="Xiong Z."/>
            <person name="Dong J."/>
            <person name="Xue Y."/>
            <person name="Zhu Y."/>
            <person name="Xu X."/>
            <person name="Sun L."/>
            <person name="Chen S."/>
            <person name="Nie H."/>
            <person name="Peng J."/>
            <person name="Xu J."/>
            <person name="Wang Y."/>
            <person name="Yuan Z."/>
            <person name="Wen Y."/>
            <person name="Yao Z."/>
            <person name="Shen Y."/>
            <person name="Qiang B."/>
            <person name="Hou Y."/>
            <person name="Yu J."/>
            <person name="Jin Q."/>
        </authorList>
    </citation>
    <scope>NUCLEOTIDE SEQUENCE [LARGE SCALE GENOMIC DNA]</scope>
    <source>
        <strain>Sd197</strain>
    </source>
</reference>
<protein>
    <recommendedName>
        <fullName evidence="1">UDP-N-acetyl-D-mannosaminuronic acid transferase</fullName>
        <shortName evidence="1">UDP-ManNAcA transferase</shortName>
        <ecNumber evidence="1">2.4.1.180</ecNumber>
    </recommendedName>
</protein>
<proteinExistence type="inferred from homology"/>